<organism>
    <name type="scientific">Burkholderia pseudomallei (strain 1710b)</name>
    <dbReference type="NCBI Taxonomy" id="320372"/>
    <lineage>
        <taxon>Bacteria</taxon>
        <taxon>Pseudomonadati</taxon>
        <taxon>Pseudomonadota</taxon>
        <taxon>Betaproteobacteria</taxon>
        <taxon>Burkholderiales</taxon>
        <taxon>Burkholderiaceae</taxon>
        <taxon>Burkholderia</taxon>
        <taxon>pseudomallei group</taxon>
    </lineage>
</organism>
<proteinExistence type="inferred from homology"/>
<sequence length="519" mass="57359">MKYKDLRDFIHGLEQRGELRRVTQPVSPVLEMTELCDRVLRAGGPALLFDAPAGHRFPVLGNLFGTPRRVALGMGVDADDEAALASLRDIGRLLSALKEPDPPKRLKDAGKLLSLAKAVWDMSPKTVSAPPCQEIVWEGDDVDLHKLPIQTCWPGDAGPLLTWGLTVTRGPNKTRQNLGIYRQQLIGRNKLIMRWLAHRGGALDFREFALKHPGQPYPVAVVLGADPATMLGAVTPVPDSLSEYQFAGLLRGARTELAKCVTPGVDALQVPARAEIVLEGFIHPQQGAPAPAPEGAPPRPAAGAAAGYEHALEGPYGDHTGYYNEQEWFPVFTVERITMRRDAIYHSTYTGKPPDEPAVLGVALNEVFVPLLQKQFAEITDFYLPPEGCSYRMAIVQMKKSYAGHAKRVMFGVWSFLRQFMYTKFIVVVDEDVNVRDWKEVIWAITTRVDPARDTVLVENTPIDYLDFASPVAGLGSKMGLDATNKWPGETQREWGRPIEMDAAVKARVDRLWTEIGLS</sequence>
<comment type="function">
    <text evidence="1">Catalyzes the decarboxylation of 3-octaprenyl-4-hydroxy benzoate to 2-octaprenylphenol, an intermediate step in ubiquinone biosynthesis.</text>
</comment>
<comment type="catalytic activity">
    <reaction evidence="1">
        <text>a 4-hydroxy-3-(all-trans-polyprenyl)benzoate + H(+) = a 2-(all-trans-polyprenyl)phenol + CO2</text>
        <dbReference type="Rhea" id="RHEA:41680"/>
        <dbReference type="Rhea" id="RHEA-COMP:9514"/>
        <dbReference type="Rhea" id="RHEA-COMP:9516"/>
        <dbReference type="ChEBI" id="CHEBI:1269"/>
        <dbReference type="ChEBI" id="CHEBI:15378"/>
        <dbReference type="ChEBI" id="CHEBI:16526"/>
        <dbReference type="ChEBI" id="CHEBI:78396"/>
        <dbReference type="EC" id="4.1.1.98"/>
    </reaction>
</comment>
<comment type="cofactor">
    <cofactor evidence="1">
        <name>prenylated FMN</name>
        <dbReference type="ChEBI" id="CHEBI:87746"/>
    </cofactor>
    <text evidence="1">Binds 1 prenylated FMN per subunit.</text>
</comment>
<comment type="cofactor">
    <cofactor evidence="1">
        <name>Mn(2+)</name>
        <dbReference type="ChEBI" id="CHEBI:29035"/>
    </cofactor>
</comment>
<comment type="pathway">
    <text evidence="1">Cofactor biosynthesis; ubiquinone biosynthesis.</text>
</comment>
<comment type="subunit">
    <text evidence="1">Homohexamer.</text>
</comment>
<comment type="subcellular location">
    <subcellularLocation>
        <location evidence="1">Cell membrane</location>
        <topology evidence="1">Peripheral membrane protein</topology>
    </subcellularLocation>
</comment>
<comment type="similarity">
    <text evidence="1">Belongs to the UbiD family.</text>
</comment>
<comment type="sequence caution" evidence="2">
    <conflict type="erroneous initiation">
        <sequence resource="EMBL-CDS" id="ABA47721"/>
    </conflict>
</comment>
<keyword id="KW-1003">Cell membrane</keyword>
<keyword id="KW-0210">Decarboxylase</keyword>
<keyword id="KW-0285">Flavoprotein</keyword>
<keyword id="KW-0288">FMN</keyword>
<keyword id="KW-0456">Lyase</keyword>
<keyword id="KW-0464">Manganese</keyword>
<keyword id="KW-0472">Membrane</keyword>
<keyword id="KW-0479">Metal-binding</keyword>
<keyword id="KW-0831">Ubiquinone biosynthesis</keyword>
<protein>
    <recommendedName>
        <fullName evidence="1">3-octaprenyl-4-hydroxybenzoate carboxy-lyase</fullName>
        <ecNumber evidence="1">4.1.1.98</ecNumber>
    </recommendedName>
    <alternativeName>
        <fullName evidence="1">Polyprenyl p-hydroxybenzoate decarboxylase</fullName>
    </alternativeName>
</protein>
<evidence type="ECO:0000255" key="1">
    <source>
        <dbReference type="HAMAP-Rule" id="MF_01636"/>
    </source>
</evidence>
<evidence type="ECO:0000305" key="2"/>
<gene>
    <name evidence="1" type="primary">ubiD</name>
    <name type="ordered locus">BURPS1710b_3106</name>
</gene>
<dbReference type="EC" id="4.1.1.98" evidence="1"/>
<dbReference type="EMBL" id="CP000124">
    <property type="protein sequence ID" value="ABA47721.1"/>
    <property type="status" value="ALT_INIT"/>
    <property type="molecule type" value="Genomic_DNA"/>
</dbReference>
<dbReference type="RefSeq" id="WP_004536419.1">
    <property type="nucleotide sequence ID" value="NC_007434.1"/>
</dbReference>
<dbReference type="SMR" id="Q3JPM4"/>
<dbReference type="EnsemblBacteria" id="ABA47721">
    <property type="protein sequence ID" value="ABA47721"/>
    <property type="gene ID" value="BURPS1710b_3106"/>
</dbReference>
<dbReference type="KEGG" id="bpm:BURPS1710b_3106"/>
<dbReference type="HOGENOM" id="CLU_023348_4_1_4"/>
<dbReference type="UniPathway" id="UPA00232"/>
<dbReference type="Proteomes" id="UP000002700">
    <property type="component" value="Chromosome I"/>
</dbReference>
<dbReference type="GO" id="GO:0005829">
    <property type="term" value="C:cytosol"/>
    <property type="evidence" value="ECO:0007669"/>
    <property type="project" value="TreeGrafter"/>
</dbReference>
<dbReference type="GO" id="GO:0005886">
    <property type="term" value="C:plasma membrane"/>
    <property type="evidence" value="ECO:0007669"/>
    <property type="project" value="UniProtKB-SubCell"/>
</dbReference>
<dbReference type="GO" id="GO:0008694">
    <property type="term" value="F:3-octaprenyl-4-hydroxybenzoate carboxy-lyase activity"/>
    <property type="evidence" value="ECO:0007669"/>
    <property type="project" value="UniProtKB-UniRule"/>
</dbReference>
<dbReference type="GO" id="GO:0046872">
    <property type="term" value="F:metal ion binding"/>
    <property type="evidence" value="ECO:0007669"/>
    <property type="project" value="UniProtKB-KW"/>
</dbReference>
<dbReference type="GO" id="GO:0006744">
    <property type="term" value="P:ubiquinone biosynthetic process"/>
    <property type="evidence" value="ECO:0007669"/>
    <property type="project" value="UniProtKB-UniRule"/>
</dbReference>
<dbReference type="FunFam" id="1.20.5.570:FF:000001">
    <property type="entry name" value="3-octaprenyl-4-hydroxybenzoate carboxy-lyase"/>
    <property type="match status" value="1"/>
</dbReference>
<dbReference type="FunFam" id="3.40.1670.10:FF:000001">
    <property type="entry name" value="3-octaprenyl-4-hydroxybenzoate carboxy-lyase"/>
    <property type="match status" value="1"/>
</dbReference>
<dbReference type="Gene3D" id="1.20.5.570">
    <property type="entry name" value="Single helix bin"/>
    <property type="match status" value="1"/>
</dbReference>
<dbReference type="Gene3D" id="3.40.1670.10">
    <property type="entry name" value="UbiD C-terminal domain-like"/>
    <property type="match status" value="1"/>
</dbReference>
<dbReference type="HAMAP" id="MF_01636">
    <property type="entry name" value="UbiD"/>
    <property type="match status" value="1"/>
</dbReference>
<dbReference type="InterPro" id="IPR002830">
    <property type="entry name" value="UbiD"/>
</dbReference>
<dbReference type="InterPro" id="IPR049381">
    <property type="entry name" value="UbiD-like_C"/>
</dbReference>
<dbReference type="InterPro" id="IPR049383">
    <property type="entry name" value="UbiD-like_N"/>
</dbReference>
<dbReference type="InterPro" id="IPR023677">
    <property type="entry name" value="UbiD_bacteria"/>
</dbReference>
<dbReference type="InterPro" id="IPR048304">
    <property type="entry name" value="UbiD_Rift_dom"/>
</dbReference>
<dbReference type="NCBIfam" id="TIGR00148">
    <property type="entry name" value="UbiD family decarboxylase"/>
    <property type="match status" value="2"/>
</dbReference>
<dbReference type="PANTHER" id="PTHR30108">
    <property type="entry name" value="3-OCTAPRENYL-4-HYDROXYBENZOATE CARBOXY-LYASE-RELATED"/>
    <property type="match status" value="1"/>
</dbReference>
<dbReference type="PANTHER" id="PTHR30108:SF17">
    <property type="entry name" value="FERULIC ACID DECARBOXYLASE 1"/>
    <property type="match status" value="1"/>
</dbReference>
<dbReference type="Pfam" id="PF01977">
    <property type="entry name" value="UbiD"/>
    <property type="match status" value="1"/>
</dbReference>
<dbReference type="Pfam" id="PF20696">
    <property type="entry name" value="UbiD_C"/>
    <property type="match status" value="1"/>
</dbReference>
<dbReference type="Pfam" id="PF20695">
    <property type="entry name" value="UbiD_N"/>
    <property type="match status" value="1"/>
</dbReference>
<dbReference type="SUPFAM" id="SSF50475">
    <property type="entry name" value="FMN-binding split barrel"/>
    <property type="match status" value="1"/>
</dbReference>
<dbReference type="SUPFAM" id="SSF143968">
    <property type="entry name" value="UbiD C-terminal domain-like"/>
    <property type="match status" value="1"/>
</dbReference>
<feature type="chain" id="PRO_0000267655" description="3-octaprenyl-4-hydroxybenzoate carboxy-lyase">
    <location>
        <begin position="1"/>
        <end position="519"/>
    </location>
</feature>
<feature type="active site" description="Proton donor" evidence="1">
    <location>
        <position position="318"/>
    </location>
</feature>
<feature type="binding site" evidence="1">
    <location>
        <position position="177"/>
    </location>
    <ligand>
        <name>Mn(2+)</name>
        <dbReference type="ChEBI" id="CHEBI:29035"/>
    </ligand>
</feature>
<feature type="binding site" evidence="1">
    <location>
        <begin position="180"/>
        <end position="182"/>
    </location>
    <ligand>
        <name>prenylated FMN</name>
        <dbReference type="ChEBI" id="CHEBI:87746"/>
    </ligand>
</feature>
<feature type="binding site" evidence="1">
    <location>
        <begin position="194"/>
        <end position="196"/>
    </location>
    <ligand>
        <name>prenylated FMN</name>
        <dbReference type="ChEBI" id="CHEBI:87746"/>
    </ligand>
</feature>
<feature type="binding site" evidence="1">
    <location>
        <begin position="199"/>
        <end position="200"/>
    </location>
    <ligand>
        <name>prenylated FMN</name>
        <dbReference type="ChEBI" id="CHEBI:87746"/>
    </ligand>
</feature>
<feature type="binding site" evidence="1">
    <location>
        <position position="243"/>
    </location>
    <ligand>
        <name>Mn(2+)</name>
        <dbReference type="ChEBI" id="CHEBI:29035"/>
    </ligand>
</feature>
<name>UBID_BURP1</name>
<accession>Q3JPM4</accession>
<reference key="1">
    <citation type="journal article" date="2010" name="Genome Biol. Evol.">
        <title>Continuing evolution of Burkholderia mallei through genome reduction and large-scale rearrangements.</title>
        <authorList>
            <person name="Losada L."/>
            <person name="Ronning C.M."/>
            <person name="DeShazer D."/>
            <person name="Woods D."/>
            <person name="Fedorova N."/>
            <person name="Kim H.S."/>
            <person name="Shabalina S.A."/>
            <person name="Pearson T.R."/>
            <person name="Brinkac L."/>
            <person name="Tan P."/>
            <person name="Nandi T."/>
            <person name="Crabtree J."/>
            <person name="Badger J."/>
            <person name="Beckstrom-Sternberg S."/>
            <person name="Saqib M."/>
            <person name="Schutzer S.E."/>
            <person name="Keim P."/>
            <person name="Nierman W.C."/>
        </authorList>
    </citation>
    <scope>NUCLEOTIDE SEQUENCE [LARGE SCALE GENOMIC DNA]</scope>
    <source>
        <strain>1710b</strain>
    </source>
</reference>